<proteinExistence type="evidence at protein level"/>
<feature type="chain" id="PRO_0000124085" description="Proteasome subunit alpha type-2-A">
    <location>
        <begin position="1"/>
        <end position="235"/>
    </location>
</feature>
<feature type="cross-link" description="Glycyl lysine isopeptide (Lys-Gly) (interchain with G-Cter in ubiquitin)" evidence="2">
    <location>
        <position position="64"/>
    </location>
</feature>
<feature type="splice variant" id="VSP_016142" description="In isoform 2." evidence="7">
    <original>MGDSQYSFSLTTFSPSGKLVQIEHALTAVGSGQTSLGIKASNGVVIATEKKLPSILVDEASVQKIQHLTPNIGVVYSGMGPDFRVLVRKSRKQAEQYLRLYKEPIPVTQLVRETATVMQEFTQSGGVRPFGVSLLVAGYDDKGPQLYQ</original>
    <variation>MIIPVRCFTCGK</variation>
    <location>
        <begin position="1"/>
        <end position="148"/>
    </location>
</feature>
<evidence type="ECO:0000250" key="1"/>
<evidence type="ECO:0000250" key="2">
    <source>
        <dbReference type="UniProtKB" id="O81149"/>
    </source>
</evidence>
<evidence type="ECO:0000255" key="3">
    <source>
        <dbReference type="PROSITE-ProRule" id="PRU00808"/>
    </source>
</evidence>
<evidence type="ECO:0000269" key="4">
    <source>
    </source>
</evidence>
<evidence type="ECO:0000269" key="5">
    <source>
    </source>
</evidence>
<evidence type="ECO:0000269" key="6">
    <source>
    </source>
</evidence>
<evidence type="ECO:0000303" key="7">
    <source>
    </source>
</evidence>
<comment type="function">
    <text>The proteasome is a multicatalytic proteinase complex which is characterized by its ability to cleave peptides with Arg, Phe, Tyr, Leu, and Glu adjacent to the leaving group at neutral or slightly basic pH. The proteasome has an ATP-dependent proteolytic activity.</text>
</comment>
<comment type="subunit">
    <text evidence="4 5 6">Component of the 20S core complex of the 26S proteasome. The 26S proteasome is composed of a core protease (CP), known as the 20S proteasome, capped at one or both ends by the 19S regulatory particle (RP/PA700). The 20S proteasome core is composed of 28 subunits that are arranged in four stacked rings, resulting in a barrel-shaped structure. The two end rings are each formed by seven alpha subunits, and the two central rings are each formed by seven beta subunits. The catalytic chamber with the active sites is on the inside of the barrel.</text>
</comment>
<comment type="subcellular location">
    <subcellularLocation>
        <location evidence="1">Cytoplasm</location>
    </subcellularLocation>
    <subcellularLocation>
        <location evidence="1">Nucleus</location>
    </subcellularLocation>
</comment>
<comment type="alternative products">
    <event type="alternative splicing"/>
    <isoform>
        <id>O23708-1</id>
        <name>1</name>
        <sequence type="displayed"/>
    </isoform>
    <isoform>
        <id>O23708-2</id>
        <name>2</name>
        <sequence type="described" ref="VSP_016142"/>
    </isoform>
</comment>
<comment type="similarity">
    <text evidence="3">Belongs to the peptidase T1A family.</text>
</comment>
<name>PSA2A_ARATH</name>
<reference key="1">
    <citation type="journal article" date="1997" name="FEBS Lett.">
        <title>The 20S proteasome gene family in Arabidopsis thaliana.</title>
        <authorList>
            <person name="Parmentier Y."/>
            <person name="Bouchez D."/>
            <person name="Fleck J."/>
            <person name="Genschik P."/>
        </authorList>
    </citation>
    <scope>NUCLEOTIDE SEQUENCE [MRNA] (ISOFORM 1)</scope>
    <source>
        <strain>cv. Columbia</strain>
    </source>
</reference>
<reference key="2">
    <citation type="journal article" date="1998" name="Genetics">
        <title>Molecular organization of the 20S proteasome gene family from Arabidopsis thaliana.</title>
        <authorList>
            <person name="Fu H."/>
            <person name="Doelling J.H."/>
            <person name="Arendt C.S."/>
            <person name="Hochstrasser M."/>
            <person name="Vierstra R.D."/>
        </authorList>
    </citation>
    <scope>NUCLEOTIDE SEQUENCE [MRNA] (ISOFORM 1)</scope>
    <scope>GENE FAMILY</scope>
    <scope>NOMENCLATURE</scope>
    <source>
        <strain>cv. Columbia</strain>
    </source>
</reference>
<reference key="3">
    <citation type="journal article" date="2000" name="Nature">
        <title>Sequence and analysis of chromosome 1 of the plant Arabidopsis thaliana.</title>
        <authorList>
            <person name="Theologis A."/>
            <person name="Ecker J.R."/>
            <person name="Palm C.J."/>
            <person name="Federspiel N.A."/>
            <person name="Kaul S."/>
            <person name="White O."/>
            <person name="Alonso J."/>
            <person name="Altafi H."/>
            <person name="Araujo R."/>
            <person name="Bowman C.L."/>
            <person name="Brooks S.Y."/>
            <person name="Buehler E."/>
            <person name="Chan A."/>
            <person name="Chao Q."/>
            <person name="Chen H."/>
            <person name="Cheuk R.F."/>
            <person name="Chin C.W."/>
            <person name="Chung M.K."/>
            <person name="Conn L."/>
            <person name="Conway A.B."/>
            <person name="Conway A.R."/>
            <person name="Creasy T.H."/>
            <person name="Dewar K."/>
            <person name="Dunn P."/>
            <person name="Etgu P."/>
            <person name="Feldblyum T.V."/>
            <person name="Feng J.-D."/>
            <person name="Fong B."/>
            <person name="Fujii C.Y."/>
            <person name="Gill J.E."/>
            <person name="Goldsmith A.D."/>
            <person name="Haas B."/>
            <person name="Hansen N.F."/>
            <person name="Hughes B."/>
            <person name="Huizar L."/>
            <person name="Hunter J.L."/>
            <person name="Jenkins J."/>
            <person name="Johnson-Hopson C."/>
            <person name="Khan S."/>
            <person name="Khaykin E."/>
            <person name="Kim C.J."/>
            <person name="Koo H.L."/>
            <person name="Kremenetskaia I."/>
            <person name="Kurtz D.B."/>
            <person name="Kwan A."/>
            <person name="Lam B."/>
            <person name="Langin-Hooper S."/>
            <person name="Lee A."/>
            <person name="Lee J.M."/>
            <person name="Lenz C.A."/>
            <person name="Li J.H."/>
            <person name="Li Y.-P."/>
            <person name="Lin X."/>
            <person name="Liu S.X."/>
            <person name="Liu Z.A."/>
            <person name="Luros J.S."/>
            <person name="Maiti R."/>
            <person name="Marziali A."/>
            <person name="Militscher J."/>
            <person name="Miranda M."/>
            <person name="Nguyen M."/>
            <person name="Nierman W.C."/>
            <person name="Osborne B.I."/>
            <person name="Pai G."/>
            <person name="Peterson J."/>
            <person name="Pham P.K."/>
            <person name="Rizzo M."/>
            <person name="Rooney T."/>
            <person name="Rowley D."/>
            <person name="Sakano H."/>
            <person name="Salzberg S.L."/>
            <person name="Schwartz J.R."/>
            <person name="Shinn P."/>
            <person name="Southwick A.M."/>
            <person name="Sun H."/>
            <person name="Tallon L.J."/>
            <person name="Tambunga G."/>
            <person name="Toriumi M.J."/>
            <person name="Town C.D."/>
            <person name="Utterback T."/>
            <person name="Van Aken S."/>
            <person name="Vaysberg M."/>
            <person name="Vysotskaia V.S."/>
            <person name="Walker M."/>
            <person name="Wu D."/>
            <person name="Yu G."/>
            <person name="Fraser C.M."/>
            <person name="Venter J.C."/>
            <person name="Davis R.W."/>
        </authorList>
    </citation>
    <scope>NUCLEOTIDE SEQUENCE [LARGE SCALE GENOMIC DNA]</scope>
    <source>
        <strain>cv. Columbia</strain>
    </source>
</reference>
<reference key="4">
    <citation type="journal article" date="2017" name="Plant J.">
        <title>Araport11: a complete reannotation of the Arabidopsis thaliana reference genome.</title>
        <authorList>
            <person name="Cheng C.Y."/>
            <person name="Krishnakumar V."/>
            <person name="Chan A.P."/>
            <person name="Thibaud-Nissen F."/>
            <person name="Schobel S."/>
            <person name="Town C.D."/>
        </authorList>
    </citation>
    <scope>GENOME REANNOTATION</scope>
    <source>
        <strain>cv. Columbia</strain>
    </source>
</reference>
<reference key="5">
    <citation type="journal article" date="2003" name="Science">
        <title>Empirical analysis of transcriptional activity in the Arabidopsis genome.</title>
        <authorList>
            <person name="Yamada K."/>
            <person name="Lim J."/>
            <person name="Dale J.M."/>
            <person name="Chen H."/>
            <person name="Shinn P."/>
            <person name="Palm C.J."/>
            <person name="Southwick A.M."/>
            <person name="Wu H.C."/>
            <person name="Kim C.J."/>
            <person name="Nguyen M."/>
            <person name="Pham P.K."/>
            <person name="Cheuk R.F."/>
            <person name="Karlin-Newmann G."/>
            <person name="Liu S.X."/>
            <person name="Lam B."/>
            <person name="Sakano H."/>
            <person name="Wu T."/>
            <person name="Yu G."/>
            <person name="Miranda M."/>
            <person name="Quach H.L."/>
            <person name="Tripp M."/>
            <person name="Chang C.H."/>
            <person name="Lee J.M."/>
            <person name="Toriumi M.J."/>
            <person name="Chan M.M."/>
            <person name="Tang C.C."/>
            <person name="Onodera C.S."/>
            <person name="Deng J.M."/>
            <person name="Akiyama K."/>
            <person name="Ansari Y."/>
            <person name="Arakawa T."/>
            <person name="Banh J."/>
            <person name="Banno F."/>
            <person name="Bowser L."/>
            <person name="Brooks S.Y."/>
            <person name="Carninci P."/>
            <person name="Chao Q."/>
            <person name="Choy N."/>
            <person name="Enju A."/>
            <person name="Goldsmith A.D."/>
            <person name="Gurjal M."/>
            <person name="Hansen N.F."/>
            <person name="Hayashizaki Y."/>
            <person name="Johnson-Hopson C."/>
            <person name="Hsuan V.W."/>
            <person name="Iida K."/>
            <person name="Karnes M."/>
            <person name="Khan S."/>
            <person name="Koesema E."/>
            <person name="Ishida J."/>
            <person name="Jiang P.X."/>
            <person name="Jones T."/>
            <person name="Kawai J."/>
            <person name="Kamiya A."/>
            <person name="Meyers C."/>
            <person name="Nakajima M."/>
            <person name="Narusaka M."/>
            <person name="Seki M."/>
            <person name="Sakurai T."/>
            <person name="Satou M."/>
            <person name="Tamse R."/>
            <person name="Vaysberg M."/>
            <person name="Wallender E.K."/>
            <person name="Wong C."/>
            <person name="Yamamura Y."/>
            <person name="Yuan S."/>
            <person name="Shinozaki K."/>
            <person name="Davis R.W."/>
            <person name="Theologis A."/>
            <person name="Ecker J.R."/>
        </authorList>
    </citation>
    <scope>NUCLEOTIDE SEQUENCE [LARGE SCALE MRNA] (ISOFORMS 1 AND 2)</scope>
    <source>
        <strain>cv. Columbia</strain>
    </source>
</reference>
<reference key="6">
    <citation type="journal article" date="2009" name="DNA Res.">
        <title>Analysis of multiple occurrences of alternative splicing events in Arabidopsis thaliana using novel sequenced full-length cDNAs.</title>
        <authorList>
            <person name="Iida K."/>
            <person name="Fukami-Kobayashi K."/>
            <person name="Toyoda A."/>
            <person name="Sakaki Y."/>
            <person name="Kobayashi M."/>
            <person name="Seki M."/>
            <person name="Shinozaki K."/>
        </authorList>
    </citation>
    <scope>NUCLEOTIDE SEQUENCE [LARGE SCALE MRNA] (ISOFORM 1)</scope>
    <source>
        <strain>cv. Columbia</strain>
    </source>
</reference>
<reference key="7">
    <citation type="submission" date="2002-03" db="EMBL/GenBank/DDBJ databases">
        <title>Full-length cDNA from Arabidopsis thaliana.</title>
        <authorList>
            <person name="Brover V.V."/>
            <person name="Troukhan M.E."/>
            <person name="Alexandrov N.A."/>
            <person name="Lu Y.-P."/>
            <person name="Flavell R.B."/>
            <person name="Feldmann K.A."/>
        </authorList>
    </citation>
    <scope>NUCLEOTIDE SEQUENCE [LARGE SCALE MRNA] (ISOFORM 1)</scope>
</reference>
<reference key="8">
    <citation type="journal article" date="1999" name="Mol. Biol. Rep.">
        <title>Structure and functional analyses of the 26S proteasome subunits from plants.</title>
        <authorList>
            <person name="Fu H."/>
            <person name="Girod P.-A."/>
            <person name="Doelling J.H."/>
            <person name="van Nocker S."/>
            <person name="Hochstrasser M."/>
            <person name="Finley D."/>
            <person name="Vierstra R.D."/>
        </authorList>
    </citation>
    <scope>SUBUNIT</scope>
</reference>
<reference key="9">
    <citation type="journal article" date="2004" name="J. Biol. Chem.">
        <title>Purification of the Arabidopsis 26 S proteasome: biochemical and molecular analyses revealed the presence of multiple isoforms.</title>
        <authorList>
            <person name="Yang P."/>
            <person name="Fu H."/>
            <person name="Walker J."/>
            <person name="Papa C.M."/>
            <person name="Smalle J."/>
            <person name="Ju Y.-M."/>
            <person name="Vierstra R.D."/>
        </authorList>
    </citation>
    <scope>SUBUNIT</scope>
    <scope>IDENTIFICATION BY MASS SPECTROMETRY</scope>
</reference>
<reference key="10">
    <citation type="journal article" date="2010" name="J. Biol. Chem.">
        <title>Affinity purification of the Arabidopsis 26 S proteasome reveals a diverse array of plant proteolytic complexes.</title>
        <authorList>
            <person name="Book A.J."/>
            <person name="Gladman N.P."/>
            <person name="Lee S.S."/>
            <person name="Scalf M."/>
            <person name="Smith L.M."/>
            <person name="Vierstra R.D."/>
        </authorList>
    </citation>
    <scope>IDENTIFICATION BY MASS SPECTROMETRY</scope>
    <scope>CHARACTERIZATION OF THE 26S PROTEASOME COMPLEX</scope>
    <scope>SUBUNIT</scope>
</reference>
<gene>
    <name type="primary">PAB1</name>
    <name type="synonym">PRC3</name>
    <name type="ordered locus">At1g16470</name>
    <name type="ORF">F3O9.27</name>
</gene>
<organism>
    <name type="scientific">Arabidopsis thaliana</name>
    <name type="common">Mouse-ear cress</name>
    <dbReference type="NCBI Taxonomy" id="3702"/>
    <lineage>
        <taxon>Eukaryota</taxon>
        <taxon>Viridiplantae</taxon>
        <taxon>Streptophyta</taxon>
        <taxon>Embryophyta</taxon>
        <taxon>Tracheophyta</taxon>
        <taxon>Spermatophyta</taxon>
        <taxon>Magnoliopsida</taxon>
        <taxon>eudicotyledons</taxon>
        <taxon>Gunneridae</taxon>
        <taxon>Pentapetalae</taxon>
        <taxon>rosids</taxon>
        <taxon>malvids</taxon>
        <taxon>Brassicales</taxon>
        <taxon>Brassicaceae</taxon>
        <taxon>Camelineae</taxon>
        <taxon>Arabidopsis</taxon>
    </lineage>
</organism>
<protein>
    <recommendedName>
        <fullName>Proteasome subunit alpha type-2-A</fullName>
    </recommendedName>
    <alternativeName>
        <fullName>20S proteasome alpha subunit B-1</fullName>
    </alternativeName>
    <alternativeName>
        <fullName>Proteasome component 3</fullName>
    </alternativeName>
</protein>
<accession>O23708</accession>
<accession>B9DGA9</accession>
<accession>Q94EI0</accession>
<dbReference type="EMBL" id="Y13176">
    <property type="protein sequence ID" value="CAA73619.1"/>
    <property type="molecule type" value="mRNA"/>
</dbReference>
<dbReference type="EMBL" id="AF043520">
    <property type="protein sequence ID" value="AAC32056.1"/>
    <property type="molecule type" value="mRNA"/>
</dbReference>
<dbReference type="EMBL" id="AC006341">
    <property type="protein sequence ID" value="AAD34699.1"/>
    <property type="molecule type" value="Genomic_DNA"/>
</dbReference>
<dbReference type="EMBL" id="CP002684">
    <property type="protein sequence ID" value="AEE29457.1"/>
    <property type="molecule type" value="Genomic_DNA"/>
</dbReference>
<dbReference type="EMBL" id="CP002684">
    <property type="protein sequence ID" value="AEE29458.1"/>
    <property type="molecule type" value="Genomic_DNA"/>
</dbReference>
<dbReference type="EMBL" id="AF332467">
    <property type="protein sequence ID" value="AAG48830.1"/>
    <property type="molecule type" value="mRNA"/>
</dbReference>
<dbReference type="EMBL" id="AF410305">
    <property type="protein sequence ID" value="AAK95291.1"/>
    <property type="molecule type" value="mRNA"/>
</dbReference>
<dbReference type="EMBL" id="BT000520">
    <property type="protein sequence ID" value="AAN18089.1"/>
    <property type="molecule type" value="mRNA"/>
</dbReference>
<dbReference type="EMBL" id="AK317085">
    <property type="protein sequence ID" value="BAH19776.1"/>
    <property type="molecule type" value="mRNA"/>
</dbReference>
<dbReference type="EMBL" id="AK317410">
    <property type="protein sequence ID" value="BAH20079.1"/>
    <property type="molecule type" value="mRNA"/>
</dbReference>
<dbReference type="EMBL" id="AY088628">
    <property type="protein sequence ID" value="AAM66950.1"/>
    <property type="molecule type" value="mRNA"/>
</dbReference>
<dbReference type="PIR" id="T51968">
    <property type="entry name" value="T51968"/>
</dbReference>
<dbReference type="RefSeq" id="NP_001031057.1">
    <molecule id="O23708-1"/>
    <property type="nucleotide sequence ID" value="NM_001035980.1"/>
</dbReference>
<dbReference type="RefSeq" id="NP_173096.1">
    <molecule id="O23708-1"/>
    <property type="nucleotide sequence ID" value="NM_101512.4"/>
</dbReference>
<dbReference type="SMR" id="O23708"/>
<dbReference type="BioGRID" id="23457">
    <property type="interactions" value="74"/>
</dbReference>
<dbReference type="FunCoup" id="O23708">
    <property type="interactions" value="4496"/>
</dbReference>
<dbReference type="STRING" id="3702.O23708"/>
<dbReference type="MEROPS" id="T01.972"/>
<dbReference type="MetOSite" id="O23708"/>
<dbReference type="PaxDb" id="3702-AT1G16470.2"/>
<dbReference type="ProteomicsDB" id="226484">
    <molecule id="O23708-1"/>
</dbReference>
<dbReference type="EnsemblPlants" id="AT1G16470.1">
    <molecule id="O23708-1"/>
    <property type="protein sequence ID" value="AT1G16470.1"/>
    <property type="gene ID" value="AT1G16470"/>
</dbReference>
<dbReference type="EnsemblPlants" id="AT1G16470.2">
    <molecule id="O23708-1"/>
    <property type="protein sequence ID" value="AT1G16470.2"/>
    <property type="gene ID" value="AT1G16470"/>
</dbReference>
<dbReference type="GeneID" id="838217"/>
<dbReference type="Gramene" id="AT1G16470.1">
    <molecule id="O23708-1"/>
    <property type="protein sequence ID" value="AT1G16470.1"/>
    <property type="gene ID" value="AT1G16470"/>
</dbReference>
<dbReference type="Gramene" id="AT1G16470.2">
    <molecule id="O23708-1"/>
    <property type="protein sequence ID" value="AT1G16470.2"/>
    <property type="gene ID" value="AT1G16470"/>
</dbReference>
<dbReference type="KEGG" id="ath:AT1G16470"/>
<dbReference type="Araport" id="AT1G16470"/>
<dbReference type="TAIR" id="AT1G16470">
    <property type="gene designation" value="PAB1"/>
</dbReference>
<dbReference type="eggNOG" id="KOG0181">
    <property type="taxonomic scope" value="Eukaryota"/>
</dbReference>
<dbReference type="HOGENOM" id="CLU_035750_4_1_1"/>
<dbReference type="InParanoid" id="O23708"/>
<dbReference type="OMA" id="ATCIGKD"/>
<dbReference type="OrthoDB" id="1067729at2759"/>
<dbReference type="PhylomeDB" id="O23708"/>
<dbReference type="PRO" id="PR:O23708"/>
<dbReference type="Proteomes" id="UP000006548">
    <property type="component" value="Chromosome 1"/>
</dbReference>
<dbReference type="ExpressionAtlas" id="O23708">
    <property type="expression patterns" value="baseline and differential"/>
</dbReference>
<dbReference type="GO" id="GO:0005829">
    <property type="term" value="C:cytosol"/>
    <property type="evidence" value="ECO:0007005"/>
    <property type="project" value="TAIR"/>
</dbReference>
<dbReference type="GO" id="GO:0022626">
    <property type="term" value="C:cytosolic ribosome"/>
    <property type="evidence" value="ECO:0007005"/>
    <property type="project" value="TAIR"/>
</dbReference>
<dbReference type="GO" id="GO:0005634">
    <property type="term" value="C:nucleus"/>
    <property type="evidence" value="ECO:0007005"/>
    <property type="project" value="TAIR"/>
</dbReference>
<dbReference type="GO" id="GO:0000502">
    <property type="term" value="C:proteasome complex"/>
    <property type="evidence" value="ECO:0000314"/>
    <property type="project" value="TAIR"/>
</dbReference>
<dbReference type="GO" id="GO:0019773">
    <property type="term" value="C:proteasome core complex, alpha-subunit complex"/>
    <property type="evidence" value="ECO:0000250"/>
    <property type="project" value="UniProtKB"/>
</dbReference>
<dbReference type="GO" id="GO:0010043">
    <property type="term" value="P:response to zinc ion"/>
    <property type="evidence" value="ECO:0000270"/>
    <property type="project" value="TAIR"/>
</dbReference>
<dbReference type="GO" id="GO:0006511">
    <property type="term" value="P:ubiquitin-dependent protein catabolic process"/>
    <property type="evidence" value="ECO:0007669"/>
    <property type="project" value="InterPro"/>
</dbReference>
<dbReference type="CDD" id="cd03750">
    <property type="entry name" value="proteasome_alpha_type_2"/>
    <property type="match status" value="1"/>
</dbReference>
<dbReference type="FunFam" id="3.60.20.10:FF:000028">
    <property type="entry name" value="Proteasome subunit alpha type"/>
    <property type="match status" value="1"/>
</dbReference>
<dbReference type="Gene3D" id="3.60.20.10">
    <property type="entry name" value="Glutamine Phosphoribosylpyrophosphate, subunit 1, domain 1"/>
    <property type="match status" value="1"/>
</dbReference>
<dbReference type="InterPro" id="IPR029055">
    <property type="entry name" value="Ntn_hydrolases_N"/>
</dbReference>
<dbReference type="InterPro" id="IPR050115">
    <property type="entry name" value="Proteasome_alpha"/>
</dbReference>
<dbReference type="InterPro" id="IPR023332">
    <property type="entry name" value="Proteasome_alpha-type"/>
</dbReference>
<dbReference type="InterPro" id="IPR000426">
    <property type="entry name" value="Proteasome_asu_N"/>
</dbReference>
<dbReference type="InterPro" id="IPR001353">
    <property type="entry name" value="Proteasome_sua/b"/>
</dbReference>
<dbReference type="NCBIfam" id="NF003075">
    <property type="entry name" value="PRK03996.1"/>
    <property type="match status" value="1"/>
</dbReference>
<dbReference type="PANTHER" id="PTHR11599">
    <property type="entry name" value="PROTEASOME SUBUNIT ALPHA/BETA"/>
    <property type="match status" value="1"/>
</dbReference>
<dbReference type="Pfam" id="PF00227">
    <property type="entry name" value="Proteasome"/>
    <property type="match status" value="1"/>
</dbReference>
<dbReference type="Pfam" id="PF10584">
    <property type="entry name" value="Proteasome_A_N"/>
    <property type="match status" value="1"/>
</dbReference>
<dbReference type="SMART" id="SM00948">
    <property type="entry name" value="Proteasome_A_N"/>
    <property type="match status" value="1"/>
</dbReference>
<dbReference type="SUPFAM" id="SSF56235">
    <property type="entry name" value="N-terminal nucleophile aminohydrolases (Ntn hydrolases)"/>
    <property type="match status" value="1"/>
</dbReference>
<dbReference type="PROSITE" id="PS00388">
    <property type="entry name" value="PROTEASOME_ALPHA_1"/>
    <property type="match status" value="1"/>
</dbReference>
<dbReference type="PROSITE" id="PS51475">
    <property type="entry name" value="PROTEASOME_ALPHA_2"/>
    <property type="match status" value="1"/>
</dbReference>
<sequence>MGDSQYSFSLTTFSPSGKLVQIEHALTAVGSGQTSLGIKASNGVVIATEKKLPSILVDEASVQKIQHLTPNIGVVYSGMGPDFRVLVRKSRKQAEQYLRLYKEPIPVTQLVRETATVMQEFTQSGGVRPFGVSLLVAGYDDKGPQLYQVDPSGSYFSWKASAMGKNVSNAKTFLEKRYTEDMELDDAIHTAILTLKEGFEGEISSKNIEIGKIGADKVFRVLTPAEIDDYLAEVE</sequence>
<keyword id="KW-0025">Alternative splicing</keyword>
<keyword id="KW-0963">Cytoplasm</keyword>
<keyword id="KW-1017">Isopeptide bond</keyword>
<keyword id="KW-0539">Nucleus</keyword>
<keyword id="KW-0647">Proteasome</keyword>
<keyword id="KW-1185">Reference proteome</keyword>
<keyword id="KW-0832">Ubl conjugation</keyword>